<dbReference type="EMBL" id="AY128673">
    <property type="protein sequence ID" value="AAN07905.1"/>
    <property type="molecule type" value="Genomic_DNA"/>
</dbReference>
<dbReference type="EMBL" id="BC116921">
    <property type="protein sequence ID" value="AAI16922.1"/>
    <property type="molecule type" value="mRNA"/>
</dbReference>
<dbReference type="EMBL" id="BC119036">
    <property type="protein sequence ID" value="AAI19037.1"/>
    <property type="molecule type" value="mRNA"/>
</dbReference>
<dbReference type="CCDS" id="CCDS17258.1"/>
<dbReference type="RefSeq" id="NP_991338.1">
    <property type="nucleotide sequence ID" value="NM_205769.3"/>
</dbReference>
<dbReference type="FunCoup" id="Q8CIT0">
    <property type="interactions" value="575"/>
</dbReference>
<dbReference type="STRING" id="10090.ENSMUSP00000061185"/>
<dbReference type="GlyGen" id="Q8CIT0">
    <property type="glycosylation" value="1 site, 1 N-linked glycan (1 site)"/>
</dbReference>
<dbReference type="PhosphoSitePlus" id="Q8CIT0"/>
<dbReference type="PaxDb" id="10090-ENSMUSP00000061185"/>
<dbReference type="ProteomicsDB" id="285308"/>
<dbReference type="Antibodypedia" id="11984">
    <property type="antibodies" value="539 antibodies from 40 providers"/>
</dbReference>
<dbReference type="DNASU" id="12918"/>
<dbReference type="Ensembl" id="ENSMUST00000061294.5">
    <property type="protein sequence ID" value="ENSMUSP00000061185.5"/>
    <property type="gene ID" value="ENSMUSG00000049796.5"/>
</dbReference>
<dbReference type="GeneID" id="12918"/>
<dbReference type="KEGG" id="mmu:12918"/>
<dbReference type="UCSC" id="uc008orx.2">
    <property type="organism name" value="mouse"/>
</dbReference>
<dbReference type="AGR" id="MGI:88496"/>
<dbReference type="CTD" id="1392"/>
<dbReference type="MGI" id="MGI:88496">
    <property type="gene designation" value="Crh"/>
</dbReference>
<dbReference type="VEuPathDB" id="HostDB:ENSMUSG00000049796"/>
<dbReference type="eggNOG" id="ENOG502S25G">
    <property type="taxonomic scope" value="Eukaryota"/>
</dbReference>
<dbReference type="GeneTree" id="ENSGT00940000154473"/>
<dbReference type="HOGENOM" id="CLU_136288_0_0_1"/>
<dbReference type="InParanoid" id="Q8CIT0"/>
<dbReference type="OMA" id="QHFQERS"/>
<dbReference type="OrthoDB" id="9837731at2759"/>
<dbReference type="PhylomeDB" id="Q8CIT0"/>
<dbReference type="TreeFam" id="TF332956"/>
<dbReference type="Reactome" id="R-MMU-373080">
    <property type="pathway name" value="Class B/2 (Secretin family receptors)"/>
</dbReference>
<dbReference type="Reactome" id="R-MMU-418555">
    <property type="pathway name" value="G alpha (s) signalling events"/>
</dbReference>
<dbReference type="BioGRID-ORCS" id="12918">
    <property type="hits" value="4 hits in 79 CRISPR screens"/>
</dbReference>
<dbReference type="PRO" id="PR:Q8CIT0"/>
<dbReference type="Proteomes" id="UP000000589">
    <property type="component" value="Chromosome 3"/>
</dbReference>
<dbReference type="RNAct" id="Q8CIT0">
    <property type="molecule type" value="protein"/>
</dbReference>
<dbReference type="Bgee" id="ENSMUSG00000049796">
    <property type="expression patterns" value="Expressed in medial vestibular nucleus and 68 other cell types or tissues"/>
</dbReference>
<dbReference type="GO" id="GO:0005576">
    <property type="term" value="C:extracellular region"/>
    <property type="evidence" value="ECO:0000304"/>
    <property type="project" value="Reactome"/>
</dbReference>
<dbReference type="GO" id="GO:0005615">
    <property type="term" value="C:extracellular space"/>
    <property type="evidence" value="ECO:0007669"/>
    <property type="project" value="Ensembl"/>
</dbReference>
<dbReference type="GO" id="GO:0043025">
    <property type="term" value="C:neuronal cell body"/>
    <property type="evidence" value="ECO:0000314"/>
    <property type="project" value="MGI"/>
</dbReference>
<dbReference type="GO" id="GO:0099013">
    <property type="term" value="C:neuronal dense core vesicle lumen"/>
    <property type="evidence" value="ECO:0007669"/>
    <property type="project" value="Ensembl"/>
</dbReference>
<dbReference type="GO" id="GO:0043204">
    <property type="term" value="C:perikaryon"/>
    <property type="evidence" value="ECO:0007669"/>
    <property type="project" value="Ensembl"/>
</dbReference>
<dbReference type="GO" id="GO:0045202">
    <property type="term" value="C:synapse"/>
    <property type="evidence" value="ECO:0007669"/>
    <property type="project" value="GOC"/>
</dbReference>
<dbReference type="GO" id="GO:0043196">
    <property type="term" value="C:varicosity"/>
    <property type="evidence" value="ECO:0007669"/>
    <property type="project" value="Ensembl"/>
</dbReference>
<dbReference type="GO" id="GO:0051430">
    <property type="term" value="F:corticotropin-releasing hormone receptor 1 binding"/>
    <property type="evidence" value="ECO:0007669"/>
    <property type="project" value="Ensembl"/>
</dbReference>
<dbReference type="GO" id="GO:0051431">
    <property type="term" value="F:corticotropin-releasing hormone receptor 2 binding"/>
    <property type="evidence" value="ECO:0007669"/>
    <property type="project" value="Ensembl"/>
</dbReference>
<dbReference type="GO" id="GO:0005179">
    <property type="term" value="F:hormone activity"/>
    <property type="evidence" value="ECO:0007669"/>
    <property type="project" value="UniProtKB-KW"/>
</dbReference>
<dbReference type="GO" id="GO:0030325">
    <property type="term" value="P:adrenal gland development"/>
    <property type="evidence" value="ECO:0000315"/>
    <property type="project" value="MGI"/>
</dbReference>
<dbReference type="GO" id="GO:0008306">
    <property type="term" value="P:associative learning"/>
    <property type="evidence" value="ECO:0007669"/>
    <property type="project" value="Ensembl"/>
</dbReference>
<dbReference type="GO" id="GO:0071314">
    <property type="term" value="P:cellular response to cocaine"/>
    <property type="evidence" value="ECO:0007669"/>
    <property type="project" value="Ensembl"/>
</dbReference>
<dbReference type="GO" id="GO:0071549">
    <property type="term" value="P:cellular response to dexamethasone stimulus"/>
    <property type="evidence" value="ECO:0007669"/>
    <property type="project" value="Ensembl"/>
</dbReference>
<dbReference type="GO" id="GO:0016101">
    <property type="term" value="P:diterpenoid metabolic process"/>
    <property type="evidence" value="ECO:0007669"/>
    <property type="project" value="Ensembl"/>
</dbReference>
<dbReference type="GO" id="GO:0007565">
    <property type="term" value="P:female pregnancy"/>
    <property type="evidence" value="ECO:0007669"/>
    <property type="project" value="Ensembl"/>
</dbReference>
<dbReference type="GO" id="GO:0006704">
    <property type="term" value="P:glucocorticoid biosynthetic process"/>
    <property type="evidence" value="ECO:0000315"/>
    <property type="project" value="MGI"/>
</dbReference>
<dbReference type="GO" id="GO:0008628">
    <property type="term" value="P:hormone-mediated apoptotic signaling pathway"/>
    <property type="evidence" value="ECO:0007669"/>
    <property type="project" value="Ensembl"/>
</dbReference>
<dbReference type="GO" id="GO:0021854">
    <property type="term" value="P:hypothalamus development"/>
    <property type="evidence" value="ECO:0007669"/>
    <property type="project" value="Ensembl"/>
</dbReference>
<dbReference type="GO" id="GO:0006954">
    <property type="term" value="P:inflammatory response"/>
    <property type="evidence" value="ECO:0000315"/>
    <property type="project" value="MGI"/>
</dbReference>
<dbReference type="GO" id="GO:0035641">
    <property type="term" value="P:locomotory exploration behavior"/>
    <property type="evidence" value="ECO:0000316"/>
    <property type="project" value="MGI"/>
</dbReference>
<dbReference type="GO" id="GO:0060291">
    <property type="term" value="P:long-term synaptic potentiation"/>
    <property type="evidence" value="ECO:0007669"/>
    <property type="project" value="Ensembl"/>
</dbReference>
<dbReference type="GO" id="GO:0030324">
    <property type="term" value="P:lung development"/>
    <property type="evidence" value="ECO:0000315"/>
    <property type="project" value="MGI"/>
</dbReference>
<dbReference type="GO" id="GO:0050801">
    <property type="term" value="P:monoatomic ion homeostasis"/>
    <property type="evidence" value="ECO:0007669"/>
    <property type="project" value="Ensembl"/>
</dbReference>
<dbReference type="GO" id="GO:0032811">
    <property type="term" value="P:negative regulation of epinephrine secretion"/>
    <property type="evidence" value="ECO:0007669"/>
    <property type="project" value="Ensembl"/>
</dbReference>
<dbReference type="GO" id="GO:0010629">
    <property type="term" value="P:negative regulation of gene expression"/>
    <property type="evidence" value="ECO:0007669"/>
    <property type="project" value="Ensembl"/>
</dbReference>
<dbReference type="GO" id="GO:0070093">
    <property type="term" value="P:negative regulation of glucagon secretion"/>
    <property type="evidence" value="ECO:0007669"/>
    <property type="project" value="Ensembl"/>
</dbReference>
<dbReference type="GO" id="GO:0033685">
    <property type="term" value="P:negative regulation of luteinizing hormone secretion"/>
    <property type="evidence" value="ECO:0007669"/>
    <property type="project" value="Ensembl"/>
</dbReference>
<dbReference type="GO" id="GO:0010700">
    <property type="term" value="P:negative regulation of norepinephrine secretion"/>
    <property type="evidence" value="ECO:0007669"/>
    <property type="project" value="Ensembl"/>
</dbReference>
<dbReference type="GO" id="GO:0003085">
    <property type="term" value="P:negative regulation of systemic arterial blood pressure"/>
    <property type="evidence" value="ECO:0007669"/>
    <property type="project" value="Ensembl"/>
</dbReference>
<dbReference type="GO" id="GO:0051402">
    <property type="term" value="P:neuron apoptotic process"/>
    <property type="evidence" value="ECO:0007669"/>
    <property type="project" value="Ensembl"/>
</dbReference>
<dbReference type="GO" id="GO:2000987">
    <property type="term" value="P:positive regulation of behavioral fear response"/>
    <property type="evidence" value="ECO:0007669"/>
    <property type="project" value="Ensembl"/>
</dbReference>
<dbReference type="GO" id="GO:0090280">
    <property type="term" value="P:positive regulation of calcium ion import"/>
    <property type="evidence" value="ECO:0007669"/>
    <property type="project" value="Ensembl"/>
</dbReference>
<dbReference type="GO" id="GO:0141163">
    <property type="term" value="P:positive regulation of cAMP/PKA signal transduction"/>
    <property type="evidence" value="ECO:0007669"/>
    <property type="project" value="Ensembl"/>
</dbReference>
<dbReference type="GO" id="GO:0008284">
    <property type="term" value="P:positive regulation of cell population proliferation"/>
    <property type="evidence" value="ECO:0007669"/>
    <property type="project" value="Ensembl"/>
</dbReference>
<dbReference type="GO" id="GO:2000854">
    <property type="term" value="P:positive regulation of corticosterone secretion"/>
    <property type="evidence" value="ECO:0007669"/>
    <property type="project" value="Ensembl"/>
</dbReference>
<dbReference type="GO" id="GO:0051461">
    <property type="term" value="P:positive regulation of corticotropin secretion"/>
    <property type="evidence" value="ECO:0007669"/>
    <property type="project" value="Ensembl"/>
</dbReference>
<dbReference type="GO" id="GO:0051464">
    <property type="term" value="P:positive regulation of cortisol secretion"/>
    <property type="evidence" value="ECO:0007669"/>
    <property type="project" value="Ensembl"/>
</dbReference>
<dbReference type="GO" id="GO:0060456">
    <property type="term" value="P:positive regulation of digestive system process"/>
    <property type="evidence" value="ECO:0007669"/>
    <property type="project" value="Ensembl"/>
</dbReference>
<dbReference type="GO" id="GO:0010628">
    <property type="term" value="P:positive regulation of gene expression"/>
    <property type="evidence" value="ECO:0007669"/>
    <property type="project" value="Ensembl"/>
</dbReference>
<dbReference type="GO" id="GO:0035774">
    <property type="term" value="P:positive regulation of insulin secretion involved in cellular response to glucose stimulus"/>
    <property type="evidence" value="ECO:0007669"/>
    <property type="project" value="Ensembl"/>
</dbReference>
<dbReference type="GO" id="GO:0014062">
    <property type="term" value="P:regulation of serotonin secretion"/>
    <property type="evidence" value="ECO:0007669"/>
    <property type="project" value="Ensembl"/>
</dbReference>
<dbReference type="GO" id="GO:1904044">
    <property type="term" value="P:response to aldosterone"/>
    <property type="evidence" value="ECO:0007669"/>
    <property type="project" value="Ensembl"/>
</dbReference>
<dbReference type="GO" id="GO:0051412">
    <property type="term" value="P:response to corticosterone"/>
    <property type="evidence" value="ECO:0007669"/>
    <property type="project" value="Ensembl"/>
</dbReference>
<dbReference type="GO" id="GO:0043627">
    <property type="term" value="P:response to estrogen"/>
    <property type="evidence" value="ECO:0007669"/>
    <property type="project" value="Ensembl"/>
</dbReference>
<dbReference type="GO" id="GO:0045471">
    <property type="term" value="P:response to ethanol"/>
    <property type="evidence" value="ECO:0007669"/>
    <property type="project" value="Ensembl"/>
</dbReference>
<dbReference type="GO" id="GO:0045472">
    <property type="term" value="P:response to ether"/>
    <property type="evidence" value="ECO:0007669"/>
    <property type="project" value="Ensembl"/>
</dbReference>
<dbReference type="GO" id="GO:0035902">
    <property type="term" value="P:response to immobilization stress"/>
    <property type="evidence" value="ECO:0007669"/>
    <property type="project" value="Ensembl"/>
</dbReference>
<dbReference type="GO" id="GO:0048265">
    <property type="term" value="P:response to pain"/>
    <property type="evidence" value="ECO:0007669"/>
    <property type="project" value="Ensembl"/>
</dbReference>
<dbReference type="GO" id="GO:0009410">
    <property type="term" value="P:response to xenobiotic stimulus"/>
    <property type="evidence" value="ECO:0007669"/>
    <property type="project" value="Ensembl"/>
</dbReference>
<dbReference type="GO" id="GO:0001963">
    <property type="term" value="P:synaptic transmission, dopaminergic"/>
    <property type="evidence" value="ECO:0007669"/>
    <property type="project" value="Ensembl"/>
</dbReference>
<dbReference type="Gene3D" id="6.10.250.1920">
    <property type="match status" value="1"/>
</dbReference>
<dbReference type="InterPro" id="IPR018446">
    <property type="entry name" value="Corticotropin-releasing_fac_CS"/>
</dbReference>
<dbReference type="InterPro" id="IPR000187">
    <property type="entry name" value="CRF"/>
</dbReference>
<dbReference type="InterPro" id="IPR003620">
    <property type="entry name" value="Urocortin_CRF"/>
</dbReference>
<dbReference type="PANTHER" id="PTHR15035:SF9">
    <property type="entry name" value="CORTICOLIBERIN"/>
    <property type="match status" value="1"/>
</dbReference>
<dbReference type="PANTHER" id="PTHR15035">
    <property type="entry name" value="CORTICOLIBERIN/UROCORTIN"/>
    <property type="match status" value="1"/>
</dbReference>
<dbReference type="Pfam" id="PF00473">
    <property type="entry name" value="CRF"/>
    <property type="match status" value="1"/>
</dbReference>
<dbReference type="PRINTS" id="PR01612">
    <property type="entry name" value="CRFFAMILY"/>
</dbReference>
<dbReference type="SMART" id="SM00039">
    <property type="entry name" value="CRF"/>
    <property type="match status" value="1"/>
</dbReference>
<dbReference type="PROSITE" id="PS00511">
    <property type="entry name" value="CRF"/>
    <property type="match status" value="1"/>
</dbReference>
<reference key="1">
    <citation type="journal article" date="1991" name="Mol. Cell. Neurosci.">
        <title>Nucleotide sequence and expression of the mouse corticotropin-releasing hormone gene.</title>
        <authorList>
            <person name="Seasholtz A.F."/>
            <person name="Bourbonais F.J."/>
            <person name="Harnden C.E."/>
            <person name="Camper S.A."/>
        </authorList>
    </citation>
    <scope>NUCLEOTIDE SEQUENCE [GENOMIC DNA]</scope>
    <scope>TISSUE SPECIFICITY</scope>
    <source>
        <strain>BALB/cJ</strain>
    </source>
</reference>
<reference key="2">
    <citation type="journal article" date="2004" name="Genome Res.">
        <title>The status, quality, and expansion of the NIH full-length cDNA project: the Mammalian Gene Collection (MGC).</title>
        <authorList>
            <consortium name="The MGC Project Team"/>
        </authorList>
    </citation>
    <scope>NUCLEOTIDE SEQUENCE [LARGE SCALE MRNA]</scope>
    <source>
        <tissue>Brain</tissue>
    </source>
</reference>
<reference key="3">
    <citation type="journal article" date="2013" name="Gastroenterology">
        <title>Stress-induced corticotropin-releasing hormone-mediated NLRP6 inflammasome inhibition and transmissible enteritis in mice.</title>
        <authorList>
            <person name="Sun Y."/>
            <person name="Zhang M."/>
            <person name="Chen C.C."/>
            <person name="Gillilland M. III"/>
            <person name="Sun X."/>
            <person name="El-Zaatari M."/>
            <person name="Huffnagle G.B."/>
            <person name="Young V.B."/>
            <person name="Zhang J."/>
            <person name="Hong S.C."/>
            <person name="Chang Y.M."/>
            <person name="Gumucio D.L."/>
            <person name="Owyang C."/>
            <person name="Kao J.Y."/>
        </authorList>
    </citation>
    <scope>FUNCTION</scope>
    <scope>INDUCTION BY STRESS</scope>
</reference>
<keyword id="KW-0027">Amidation</keyword>
<keyword id="KW-0165">Cleavage on pair of basic residues</keyword>
<keyword id="KW-0372">Hormone</keyword>
<keyword id="KW-1185">Reference proteome</keyword>
<keyword id="KW-0964">Secreted</keyword>
<keyword id="KW-0732">Signal</keyword>
<sequence>MRLRLLVSAGMLLVALSSCLPCRALLSRGSVPRAPRAPQPLNFLQPEQPQQPQPVLIRMGEEYFLRLGNLNRSPAARLSPNSTPLTAGRGSRPSHDQAAANFFRVLLQQLQMPQRSLDSRAEPAERGAEDALGGHQGALERERRSEEPPISLDLTFHLLREVLEMARAEQLAQQAHSNRKLMEIIGK</sequence>
<proteinExistence type="evidence at transcript level"/>
<feature type="signal peptide" evidence="4">
    <location>
        <begin position="1"/>
        <end position="19"/>
    </location>
</feature>
<feature type="propeptide" id="PRO_0000006214" evidence="1">
    <location>
        <begin position="20"/>
        <end position="144"/>
    </location>
</feature>
<feature type="peptide" id="PRO_0000006215" description="Corticoliberin">
    <location>
        <begin position="145"/>
        <end position="185"/>
    </location>
</feature>
<feature type="region of interest" description="Disordered" evidence="5">
    <location>
        <begin position="75"/>
        <end position="94"/>
    </location>
</feature>
<feature type="region of interest" description="Disordered" evidence="5">
    <location>
        <begin position="114"/>
        <end position="146"/>
    </location>
</feature>
<feature type="compositionally biased region" description="Basic and acidic residues" evidence="5">
    <location>
        <begin position="117"/>
        <end position="129"/>
    </location>
</feature>
<feature type="modified residue" description="Isoleucine amide" evidence="1">
    <location>
        <position position="185"/>
    </location>
</feature>
<accession>Q8CIT0</accession>
<accession>Q14AA2</accession>
<comment type="function">
    <text evidence="2 7">Hormone regulating the release of corticotropin from pituitary gland. Induces NLRP6 in intestinal epithelial cells, hence may influence gut microbiota profile (PubMed:23470617).</text>
</comment>
<comment type="subunit">
    <text evidence="3">Interacts (via C-terminus) with CRFR1 (via N-terminal extracellular domain).</text>
</comment>
<comment type="subcellular location">
    <subcellularLocation>
        <location evidence="2">Secreted</location>
    </subcellularLocation>
</comment>
<comment type="tissue specificity">
    <text evidence="6">Expressed in parvocellular paraventricular nucleus of the hypothalamus and in medial accessory olivary nucleus.</text>
</comment>
<comment type="induction">
    <text evidence="7">Up-regulated during water-avoidance stress.</text>
</comment>
<comment type="similarity">
    <text evidence="8">Belongs to the sauvagine/corticotropin-releasing factor/urotensin I family.</text>
</comment>
<organism>
    <name type="scientific">Mus musculus</name>
    <name type="common">Mouse</name>
    <dbReference type="NCBI Taxonomy" id="10090"/>
    <lineage>
        <taxon>Eukaryota</taxon>
        <taxon>Metazoa</taxon>
        <taxon>Chordata</taxon>
        <taxon>Craniata</taxon>
        <taxon>Vertebrata</taxon>
        <taxon>Euteleostomi</taxon>
        <taxon>Mammalia</taxon>
        <taxon>Eutheria</taxon>
        <taxon>Euarchontoglires</taxon>
        <taxon>Glires</taxon>
        <taxon>Rodentia</taxon>
        <taxon>Myomorpha</taxon>
        <taxon>Muroidea</taxon>
        <taxon>Muridae</taxon>
        <taxon>Murinae</taxon>
        <taxon>Mus</taxon>
        <taxon>Mus</taxon>
    </lineage>
</organism>
<protein>
    <recommendedName>
        <fullName>Corticoliberin</fullName>
    </recommendedName>
    <alternativeName>
        <fullName>Corticotropin-releasing factor</fullName>
        <shortName>CRF</shortName>
    </alternativeName>
    <alternativeName>
        <fullName>Corticotropin-releasing hormone</fullName>
    </alternativeName>
</protein>
<name>CRF_MOUSE</name>
<gene>
    <name type="primary">Crh</name>
    <name type="synonym">Gm1347</name>
</gene>
<evidence type="ECO:0000250" key="1"/>
<evidence type="ECO:0000250" key="2">
    <source>
        <dbReference type="UniProtKB" id="P06296"/>
    </source>
</evidence>
<evidence type="ECO:0000250" key="3">
    <source>
        <dbReference type="UniProtKB" id="P06850"/>
    </source>
</evidence>
<evidence type="ECO:0000255" key="4"/>
<evidence type="ECO:0000256" key="5">
    <source>
        <dbReference type="SAM" id="MobiDB-lite"/>
    </source>
</evidence>
<evidence type="ECO:0000269" key="6">
    <source>
    </source>
</evidence>
<evidence type="ECO:0000269" key="7">
    <source>
    </source>
</evidence>
<evidence type="ECO:0000305" key="8"/>